<accession>Q9KLK3</accession>
<feature type="chain" id="PRO_0000309439" description="UPF0502 protein VC_A0740">
    <location>
        <begin position="1"/>
        <end position="216"/>
    </location>
</feature>
<organism>
    <name type="scientific">Vibrio cholerae serotype O1 (strain ATCC 39315 / El Tor Inaba N16961)</name>
    <dbReference type="NCBI Taxonomy" id="243277"/>
    <lineage>
        <taxon>Bacteria</taxon>
        <taxon>Pseudomonadati</taxon>
        <taxon>Pseudomonadota</taxon>
        <taxon>Gammaproteobacteria</taxon>
        <taxon>Vibrionales</taxon>
        <taxon>Vibrionaceae</taxon>
        <taxon>Vibrio</taxon>
    </lineage>
</organism>
<reference key="1">
    <citation type="journal article" date="2000" name="Nature">
        <title>DNA sequence of both chromosomes of the cholera pathogen Vibrio cholerae.</title>
        <authorList>
            <person name="Heidelberg J.F."/>
            <person name="Eisen J.A."/>
            <person name="Nelson W.C."/>
            <person name="Clayton R.A."/>
            <person name="Gwinn M.L."/>
            <person name="Dodson R.J."/>
            <person name="Haft D.H."/>
            <person name="Hickey E.K."/>
            <person name="Peterson J.D."/>
            <person name="Umayam L.A."/>
            <person name="Gill S.R."/>
            <person name="Nelson K.E."/>
            <person name="Read T.D."/>
            <person name="Tettelin H."/>
            <person name="Richardson D.L."/>
            <person name="Ermolaeva M.D."/>
            <person name="Vamathevan J.J."/>
            <person name="Bass S."/>
            <person name="Qin H."/>
            <person name="Dragoi I."/>
            <person name="Sellers P."/>
            <person name="McDonald L.A."/>
            <person name="Utterback T.R."/>
            <person name="Fleischmann R.D."/>
            <person name="Nierman W.C."/>
            <person name="White O."/>
            <person name="Salzberg S.L."/>
            <person name="Smith H.O."/>
            <person name="Colwell R.R."/>
            <person name="Mekalanos J.J."/>
            <person name="Venter J.C."/>
            <person name="Fraser C.M."/>
        </authorList>
    </citation>
    <scope>NUCLEOTIDE SEQUENCE [LARGE SCALE GENOMIC DNA]</scope>
    <source>
        <strain>ATCC 39315 / El Tor Inaba N16961</strain>
    </source>
</reference>
<protein>
    <recommendedName>
        <fullName evidence="1">UPF0502 protein VC_A0740</fullName>
    </recommendedName>
</protein>
<sequence>MNIQLSPLEARVIGCLIEKEVTTPDHYPLTLNSLTTACNQKSNREPVLNLSEAEVQDTVEGLIARRLVSDESSFNSRTSKYQHRFCNTEFGDLKLNQQELGLICCLLLRGAQTPGELRTRTNRLCTFTDVKETEAVLERLANRDSGALVVKLPREPGKRESRYHHLFCGEVDMAAFATSSDNEANASSQYAELEQEVAALREEVAELRALIEQHLS</sequence>
<proteinExistence type="inferred from homology"/>
<comment type="similarity">
    <text evidence="1">Belongs to the UPF0502 family.</text>
</comment>
<name>Y3540_VIBCH</name>
<gene>
    <name type="ordered locus">VC_A0740</name>
</gene>
<keyword id="KW-1185">Reference proteome</keyword>
<evidence type="ECO:0000255" key="1">
    <source>
        <dbReference type="HAMAP-Rule" id="MF_01584"/>
    </source>
</evidence>
<dbReference type="EMBL" id="AE003853">
    <property type="protein sequence ID" value="AAF96639.1"/>
    <property type="molecule type" value="Genomic_DNA"/>
</dbReference>
<dbReference type="PIR" id="G82421">
    <property type="entry name" value="G82421"/>
</dbReference>
<dbReference type="RefSeq" id="NP_233127.1">
    <property type="nucleotide sequence ID" value="NC_002506.1"/>
</dbReference>
<dbReference type="RefSeq" id="WP_001025631.1">
    <property type="nucleotide sequence ID" value="NZ_LT906615.1"/>
</dbReference>
<dbReference type="SMR" id="Q9KLK3"/>
<dbReference type="STRING" id="243277.VC_A0740"/>
<dbReference type="DNASU" id="2611927"/>
<dbReference type="EnsemblBacteria" id="AAF96639">
    <property type="protein sequence ID" value="AAF96639"/>
    <property type="gene ID" value="VC_A0740"/>
</dbReference>
<dbReference type="KEGG" id="vch:VC_A0740"/>
<dbReference type="PATRIC" id="fig|243277.26.peg.3363"/>
<dbReference type="eggNOG" id="COG3132">
    <property type="taxonomic scope" value="Bacteria"/>
</dbReference>
<dbReference type="HOGENOM" id="CLU_057831_2_0_6"/>
<dbReference type="Proteomes" id="UP000000584">
    <property type="component" value="Chromosome 2"/>
</dbReference>
<dbReference type="Gene3D" id="1.10.10.10">
    <property type="entry name" value="Winged helix-like DNA-binding domain superfamily/Winged helix DNA-binding domain"/>
    <property type="match status" value="2"/>
</dbReference>
<dbReference type="HAMAP" id="MF_01584">
    <property type="entry name" value="UPF0502"/>
    <property type="match status" value="1"/>
</dbReference>
<dbReference type="InterPro" id="IPR007432">
    <property type="entry name" value="DUF480"/>
</dbReference>
<dbReference type="InterPro" id="IPR036388">
    <property type="entry name" value="WH-like_DNA-bd_sf"/>
</dbReference>
<dbReference type="InterPro" id="IPR036390">
    <property type="entry name" value="WH_DNA-bd_sf"/>
</dbReference>
<dbReference type="PANTHER" id="PTHR38768">
    <property type="entry name" value="UPF0502 PROTEIN YCEH"/>
    <property type="match status" value="1"/>
</dbReference>
<dbReference type="PANTHER" id="PTHR38768:SF1">
    <property type="entry name" value="UPF0502 PROTEIN YCEH"/>
    <property type="match status" value="1"/>
</dbReference>
<dbReference type="Pfam" id="PF04337">
    <property type="entry name" value="DUF480"/>
    <property type="match status" value="1"/>
</dbReference>
<dbReference type="SUPFAM" id="SSF46785">
    <property type="entry name" value="Winged helix' DNA-binding domain"/>
    <property type="match status" value="2"/>
</dbReference>